<evidence type="ECO:0000255" key="1">
    <source>
        <dbReference type="HAMAP-Rule" id="MF_03038"/>
    </source>
</evidence>
<evidence type="ECO:0000256" key="2">
    <source>
        <dbReference type="SAM" id="MobiDB-lite"/>
    </source>
</evidence>
<organism>
    <name type="scientific">Cryptococcus neoformans var. neoformans serotype D (strain JEC21 / ATCC MYA-565)</name>
    <name type="common">Filobasidiella neoformans</name>
    <dbReference type="NCBI Taxonomy" id="214684"/>
    <lineage>
        <taxon>Eukaryota</taxon>
        <taxon>Fungi</taxon>
        <taxon>Dikarya</taxon>
        <taxon>Basidiomycota</taxon>
        <taxon>Agaricomycotina</taxon>
        <taxon>Tremellomycetes</taxon>
        <taxon>Tremellales</taxon>
        <taxon>Cryptococcaceae</taxon>
        <taxon>Cryptococcus</taxon>
        <taxon>Cryptococcus neoformans species complex</taxon>
    </lineage>
</organism>
<name>NBP35_CRYNJ</name>
<reference key="1">
    <citation type="journal article" date="2005" name="Science">
        <title>The genome of the basidiomycetous yeast and human pathogen Cryptococcus neoformans.</title>
        <authorList>
            <person name="Loftus B.J."/>
            <person name="Fung E."/>
            <person name="Roncaglia P."/>
            <person name="Rowley D."/>
            <person name="Amedeo P."/>
            <person name="Bruno D."/>
            <person name="Vamathevan J."/>
            <person name="Miranda M."/>
            <person name="Anderson I.J."/>
            <person name="Fraser J.A."/>
            <person name="Allen J.E."/>
            <person name="Bosdet I.E."/>
            <person name="Brent M.R."/>
            <person name="Chiu R."/>
            <person name="Doering T.L."/>
            <person name="Donlin M.J."/>
            <person name="D'Souza C.A."/>
            <person name="Fox D.S."/>
            <person name="Grinberg V."/>
            <person name="Fu J."/>
            <person name="Fukushima M."/>
            <person name="Haas B.J."/>
            <person name="Huang J.C."/>
            <person name="Janbon G."/>
            <person name="Jones S.J.M."/>
            <person name="Koo H.L."/>
            <person name="Krzywinski M.I."/>
            <person name="Kwon-Chung K.J."/>
            <person name="Lengeler K.B."/>
            <person name="Maiti R."/>
            <person name="Marra M.A."/>
            <person name="Marra R.E."/>
            <person name="Mathewson C.A."/>
            <person name="Mitchell T.G."/>
            <person name="Pertea M."/>
            <person name="Riggs F.R."/>
            <person name="Salzberg S.L."/>
            <person name="Schein J.E."/>
            <person name="Shvartsbeyn A."/>
            <person name="Shin H."/>
            <person name="Shumway M."/>
            <person name="Specht C.A."/>
            <person name="Suh B.B."/>
            <person name="Tenney A."/>
            <person name="Utterback T.R."/>
            <person name="Wickes B.L."/>
            <person name="Wortman J.R."/>
            <person name="Wye N.H."/>
            <person name="Kronstad J.W."/>
            <person name="Lodge J.K."/>
            <person name="Heitman J."/>
            <person name="Davis R.W."/>
            <person name="Fraser C.M."/>
            <person name="Hyman R.W."/>
        </authorList>
    </citation>
    <scope>NUCLEOTIDE SEQUENCE [LARGE SCALE GENOMIC DNA]</scope>
    <source>
        <strain>JEC21 / ATCC MYA-565</strain>
    </source>
</reference>
<dbReference type="EMBL" id="AE017345">
    <property type="protein sequence ID" value="AAW43552.1"/>
    <property type="molecule type" value="Genomic_DNA"/>
</dbReference>
<dbReference type="RefSeq" id="XP_570859.1">
    <property type="nucleotide sequence ID" value="XM_570859.1"/>
</dbReference>
<dbReference type="SMR" id="P0CO88"/>
<dbReference type="FunCoup" id="P0CO88">
    <property type="interactions" value="334"/>
</dbReference>
<dbReference type="STRING" id="214684.P0CO88"/>
<dbReference type="PaxDb" id="214684-P0CO88"/>
<dbReference type="EnsemblFungi" id="AAW43552">
    <property type="protein sequence ID" value="AAW43552"/>
    <property type="gene ID" value="CNE03090"/>
</dbReference>
<dbReference type="GeneID" id="3258000"/>
<dbReference type="KEGG" id="cne:CNE03090"/>
<dbReference type="VEuPathDB" id="FungiDB:CNE03090"/>
<dbReference type="eggNOG" id="KOG3022">
    <property type="taxonomic scope" value="Eukaryota"/>
</dbReference>
<dbReference type="HOGENOM" id="CLU_024839_0_1_1"/>
<dbReference type="InParanoid" id="P0CO88"/>
<dbReference type="OMA" id="VSGCPMR"/>
<dbReference type="OrthoDB" id="1741334at2759"/>
<dbReference type="Proteomes" id="UP000002149">
    <property type="component" value="Chromosome 5"/>
</dbReference>
<dbReference type="GO" id="GO:0005829">
    <property type="term" value="C:cytosol"/>
    <property type="evidence" value="ECO:0000318"/>
    <property type="project" value="GO_Central"/>
</dbReference>
<dbReference type="GO" id="GO:0051539">
    <property type="term" value="F:4 iron, 4 sulfur cluster binding"/>
    <property type="evidence" value="ECO:0007669"/>
    <property type="project" value="UniProtKB-UniRule"/>
</dbReference>
<dbReference type="GO" id="GO:0005524">
    <property type="term" value="F:ATP binding"/>
    <property type="evidence" value="ECO:0007669"/>
    <property type="project" value="UniProtKB-KW"/>
</dbReference>
<dbReference type="GO" id="GO:0140663">
    <property type="term" value="F:ATP-dependent FeS chaperone activity"/>
    <property type="evidence" value="ECO:0007669"/>
    <property type="project" value="InterPro"/>
</dbReference>
<dbReference type="GO" id="GO:0051536">
    <property type="term" value="F:iron-sulfur cluster binding"/>
    <property type="evidence" value="ECO:0000318"/>
    <property type="project" value="GO_Central"/>
</dbReference>
<dbReference type="GO" id="GO:0046872">
    <property type="term" value="F:metal ion binding"/>
    <property type="evidence" value="ECO:0007669"/>
    <property type="project" value="UniProtKB-KW"/>
</dbReference>
<dbReference type="GO" id="GO:0016226">
    <property type="term" value="P:iron-sulfur cluster assembly"/>
    <property type="evidence" value="ECO:0000318"/>
    <property type="project" value="GO_Central"/>
</dbReference>
<dbReference type="CDD" id="cd02037">
    <property type="entry name" value="Mrp_NBP35"/>
    <property type="match status" value="1"/>
</dbReference>
<dbReference type="FunFam" id="3.40.50.300:FF:000427">
    <property type="entry name" value="Cytosolic Fe-S cluster assembly factor NUBP1"/>
    <property type="match status" value="1"/>
</dbReference>
<dbReference type="Gene3D" id="3.40.50.300">
    <property type="entry name" value="P-loop containing nucleotide triphosphate hydrolases"/>
    <property type="match status" value="1"/>
</dbReference>
<dbReference type="HAMAP" id="MF_02040">
    <property type="entry name" value="Mrp_NBP35"/>
    <property type="match status" value="1"/>
</dbReference>
<dbReference type="HAMAP" id="MF_03038">
    <property type="entry name" value="NUBP1"/>
    <property type="match status" value="1"/>
</dbReference>
<dbReference type="InterPro" id="IPR000808">
    <property type="entry name" value="Mrp-like_CS"/>
</dbReference>
<dbReference type="InterPro" id="IPR019591">
    <property type="entry name" value="Mrp/NBP35_ATP-bd"/>
</dbReference>
<dbReference type="InterPro" id="IPR028601">
    <property type="entry name" value="NUBP1/Nbp35"/>
</dbReference>
<dbReference type="InterPro" id="IPR027417">
    <property type="entry name" value="P-loop_NTPase"/>
</dbReference>
<dbReference type="InterPro" id="IPR033756">
    <property type="entry name" value="YlxH/NBP35"/>
</dbReference>
<dbReference type="PANTHER" id="PTHR23264:SF35">
    <property type="entry name" value="CYTOSOLIC FE-S CLUSTER ASSEMBLY FACTOR NUBP1"/>
    <property type="match status" value="1"/>
</dbReference>
<dbReference type="PANTHER" id="PTHR23264">
    <property type="entry name" value="NUCLEOTIDE-BINDING PROTEIN NBP35 YEAST -RELATED"/>
    <property type="match status" value="1"/>
</dbReference>
<dbReference type="Pfam" id="PF10609">
    <property type="entry name" value="ParA"/>
    <property type="match status" value="1"/>
</dbReference>
<dbReference type="SUPFAM" id="SSF52540">
    <property type="entry name" value="P-loop containing nucleoside triphosphate hydrolases"/>
    <property type="match status" value="1"/>
</dbReference>
<dbReference type="PROSITE" id="PS01215">
    <property type="entry name" value="MRP"/>
    <property type="match status" value="1"/>
</dbReference>
<accession>P0CO88</accession>
<accession>Q55S73</accession>
<accession>Q5KGM5</accession>
<feature type="chain" id="PRO_0000278895" description="Cytosolic Fe-S cluster assembly factor NBP35">
    <location>
        <begin position="1"/>
        <end position="336"/>
    </location>
</feature>
<feature type="region of interest" description="Disordered" evidence="2">
    <location>
        <begin position="1"/>
        <end position="20"/>
    </location>
</feature>
<feature type="binding site" evidence="1">
    <location>
        <position position="35"/>
    </location>
    <ligand>
        <name>[4Fe-4S] cluster</name>
        <dbReference type="ChEBI" id="CHEBI:49883"/>
        <label>1</label>
    </ligand>
</feature>
<feature type="binding site" evidence="1">
    <location>
        <position position="49"/>
    </location>
    <ligand>
        <name>[4Fe-4S] cluster</name>
        <dbReference type="ChEBI" id="CHEBI:49883"/>
        <label>1</label>
    </ligand>
</feature>
<feature type="binding site" evidence="1">
    <location>
        <position position="52"/>
    </location>
    <ligand>
        <name>[4Fe-4S] cluster</name>
        <dbReference type="ChEBI" id="CHEBI:49883"/>
        <label>1</label>
    </ligand>
</feature>
<feature type="binding site" evidence="1">
    <location>
        <position position="58"/>
    </location>
    <ligand>
        <name>[4Fe-4S] cluster</name>
        <dbReference type="ChEBI" id="CHEBI:49883"/>
        <label>1</label>
    </ligand>
</feature>
<feature type="binding site" evidence="1">
    <location>
        <begin position="88"/>
        <end position="95"/>
    </location>
    <ligand>
        <name>ATP</name>
        <dbReference type="ChEBI" id="CHEBI:30616"/>
    </ligand>
</feature>
<feature type="binding site" evidence="1">
    <location>
        <position position="261"/>
    </location>
    <ligand>
        <name>[4Fe-4S] cluster</name>
        <dbReference type="ChEBI" id="CHEBI:49883"/>
        <label>2</label>
        <note>ligand shared with heterodimeric partner</note>
    </ligand>
</feature>
<feature type="binding site" evidence="1">
    <location>
        <position position="264"/>
    </location>
    <ligand>
        <name>[4Fe-4S] cluster</name>
        <dbReference type="ChEBI" id="CHEBI:49883"/>
        <label>2</label>
        <note>ligand shared with heterodimeric partner</note>
    </ligand>
</feature>
<comment type="function">
    <text evidence="1">Component of the cytosolic iron-sulfur (Fe/S) protein assembly (CIA) machinery. Required for maturation of extramitochondrial Fe-S proteins. The NBP35-CFD1 heterotetramer forms a Fe-S scaffold complex, mediating the de novo assembly of an Fe-S cluster and its transfer to target apoproteins.</text>
</comment>
<comment type="cofactor">
    <cofactor evidence="1">
        <name>[4Fe-4S] cluster</name>
        <dbReference type="ChEBI" id="CHEBI:49883"/>
    </cofactor>
    <text evidence="1">Binds 4 [4Fe-4S] clusters per heterotetramer. Contains two stable clusters in the N-termini of NBP35 and two labile, bridging clusters between subunits of the NBP35-CFD1 heterotetramer.</text>
</comment>
<comment type="subunit">
    <text evidence="1">Heterotetramer of 2 NBP35 and 2 CFD1 chains.</text>
</comment>
<comment type="subcellular location">
    <subcellularLocation>
        <location evidence="1">Cytoplasm</location>
    </subcellularLocation>
</comment>
<comment type="similarity">
    <text evidence="1">Belongs to the Mrp/NBP35 ATP-binding proteins family. NUBP1/NBP35 subfamily.</text>
</comment>
<keyword id="KW-0004">4Fe-4S</keyword>
<keyword id="KW-0067">ATP-binding</keyword>
<keyword id="KW-0963">Cytoplasm</keyword>
<keyword id="KW-0408">Iron</keyword>
<keyword id="KW-0411">Iron-sulfur</keyword>
<keyword id="KW-0479">Metal-binding</keyword>
<keyword id="KW-0547">Nucleotide-binding</keyword>
<keyword id="KW-1185">Reference proteome</keyword>
<proteinExistence type="inferred from homology"/>
<protein>
    <recommendedName>
        <fullName evidence="1">Cytosolic Fe-S cluster assembly factor NBP35</fullName>
    </recommendedName>
    <alternativeName>
        <fullName evidence="1">Nucleotide-binding protein 35</fullName>
    </alternativeName>
</protein>
<gene>
    <name evidence="1" type="primary">NBP35</name>
    <name type="ordered locus">CNE03090</name>
</gene>
<sequence>MIATQRPFPIPSPVPLAPSSTVLPTTVPENAPEHCPGVESSQAGKADACEGCPNQSVCAEGPKGPDPDLPLIRERMSSVRRKILVLSGKGGVGKSTFTAGLSWALAADEECQAGIMDIDICGPSIPLLMGLESSTIHTSASGWSPAYALDNLAVMSIGFLLPSSSDAVIWRGPKKNGLIKQFLKDVEWGDLDYMVVDTPPGTSDEHLSIVQYLKEAGIDGAVLVTTPQEVALQDVRKEIDFCKKVGIPILGLVENMSGFVCPNCKNESQIFAPTTGGAEAMGKELGIELLGKVPLDPRIGMTCDQGMSFLDEYPESPATMAYLDIVQRIREILDDE</sequence>